<reference key="1">
    <citation type="journal article" date="2009" name="Proc. Natl. Acad. Sci. U.S.A.">
        <title>The mosaic genome structure of the Wolbachia wRi strain infecting Drosophila simulans.</title>
        <authorList>
            <person name="Klasson L."/>
            <person name="Westberg J."/>
            <person name="Sapountzis P."/>
            <person name="Naeslund K."/>
            <person name="Lutnaes Y."/>
            <person name="Darby A.C."/>
            <person name="Veneti Z."/>
            <person name="Chen L."/>
            <person name="Braig H.R."/>
            <person name="Garrett R."/>
            <person name="Bourtzis K."/>
            <person name="Andersson S.G."/>
        </authorList>
    </citation>
    <scope>NUCLEOTIDE SEQUENCE [LARGE SCALE GENOMIC DNA]</scope>
    <source>
        <strain>wRi</strain>
    </source>
</reference>
<protein>
    <recommendedName>
        <fullName evidence="1">Large ribosomal subunit protein bL19</fullName>
    </recommendedName>
    <alternativeName>
        <fullName evidence="2">50S ribosomal protein L19</fullName>
    </alternativeName>
</protein>
<keyword id="KW-0687">Ribonucleoprotein</keyword>
<keyword id="KW-0689">Ribosomal protein</keyword>
<organism>
    <name type="scientific">Wolbachia sp. subsp. Drosophila simulans (strain wRi)</name>
    <dbReference type="NCBI Taxonomy" id="66084"/>
    <lineage>
        <taxon>Bacteria</taxon>
        <taxon>Pseudomonadati</taxon>
        <taxon>Pseudomonadota</taxon>
        <taxon>Alphaproteobacteria</taxon>
        <taxon>Rickettsiales</taxon>
        <taxon>Anaplasmataceae</taxon>
        <taxon>Wolbachieae</taxon>
        <taxon>Wolbachia</taxon>
    </lineage>
</organism>
<gene>
    <name evidence="1" type="primary">rplS</name>
    <name type="ordered locus">WRi_009770</name>
</gene>
<evidence type="ECO:0000255" key="1">
    <source>
        <dbReference type="HAMAP-Rule" id="MF_00402"/>
    </source>
</evidence>
<evidence type="ECO:0000305" key="2"/>
<name>RL19_WOLWR</name>
<sequence length="125" mass="14372">MTNLLKKFNEQQMQVLAKEIPEFRPGDDLKVTFKVVDGTSERIQIFEGVCISKRNRGLHSSFAVRKVSHGESIVSQFFVYSPALVSVQVTRKGKVRRAKLYYLCKLFGKAARIKERTTYVKKKSK</sequence>
<accession>C0R442</accession>
<dbReference type="EMBL" id="CP001391">
    <property type="protein sequence ID" value="ACN95684.1"/>
    <property type="molecule type" value="Genomic_DNA"/>
</dbReference>
<dbReference type="RefSeq" id="WP_006279489.1">
    <property type="nucleotide sequence ID" value="NZ_MKIF01000073.1"/>
</dbReference>
<dbReference type="SMR" id="C0R442"/>
<dbReference type="STRING" id="66084.WRi_009770"/>
<dbReference type="GeneID" id="70036500"/>
<dbReference type="KEGG" id="wri:WRi_009770"/>
<dbReference type="HOGENOM" id="CLU_103507_2_1_5"/>
<dbReference type="Proteomes" id="UP000001293">
    <property type="component" value="Chromosome"/>
</dbReference>
<dbReference type="GO" id="GO:0022625">
    <property type="term" value="C:cytosolic large ribosomal subunit"/>
    <property type="evidence" value="ECO:0007669"/>
    <property type="project" value="TreeGrafter"/>
</dbReference>
<dbReference type="GO" id="GO:0003735">
    <property type="term" value="F:structural constituent of ribosome"/>
    <property type="evidence" value="ECO:0007669"/>
    <property type="project" value="InterPro"/>
</dbReference>
<dbReference type="GO" id="GO:0006412">
    <property type="term" value="P:translation"/>
    <property type="evidence" value="ECO:0007669"/>
    <property type="project" value="UniProtKB-UniRule"/>
</dbReference>
<dbReference type="Gene3D" id="2.30.30.790">
    <property type="match status" value="1"/>
</dbReference>
<dbReference type="HAMAP" id="MF_00402">
    <property type="entry name" value="Ribosomal_bL19"/>
    <property type="match status" value="1"/>
</dbReference>
<dbReference type="InterPro" id="IPR001857">
    <property type="entry name" value="Ribosomal_bL19"/>
</dbReference>
<dbReference type="InterPro" id="IPR038657">
    <property type="entry name" value="Ribosomal_bL19_sf"/>
</dbReference>
<dbReference type="InterPro" id="IPR008991">
    <property type="entry name" value="Translation_prot_SH3-like_sf"/>
</dbReference>
<dbReference type="NCBIfam" id="TIGR01024">
    <property type="entry name" value="rplS_bact"/>
    <property type="match status" value="1"/>
</dbReference>
<dbReference type="PANTHER" id="PTHR15680:SF9">
    <property type="entry name" value="LARGE RIBOSOMAL SUBUNIT PROTEIN BL19M"/>
    <property type="match status" value="1"/>
</dbReference>
<dbReference type="PANTHER" id="PTHR15680">
    <property type="entry name" value="RIBOSOMAL PROTEIN L19"/>
    <property type="match status" value="1"/>
</dbReference>
<dbReference type="Pfam" id="PF01245">
    <property type="entry name" value="Ribosomal_L19"/>
    <property type="match status" value="1"/>
</dbReference>
<dbReference type="PIRSF" id="PIRSF002191">
    <property type="entry name" value="Ribosomal_L19"/>
    <property type="match status" value="1"/>
</dbReference>
<dbReference type="PRINTS" id="PR00061">
    <property type="entry name" value="RIBOSOMALL19"/>
</dbReference>
<dbReference type="SUPFAM" id="SSF50104">
    <property type="entry name" value="Translation proteins SH3-like domain"/>
    <property type="match status" value="1"/>
</dbReference>
<comment type="function">
    <text evidence="1">This protein is located at the 30S-50S ribosomal subunit interface and may play a role in the structure and function of the aminoacyl-tRNA binding site.</text>
</comment>
<comment type="similarity">
    <text evidence="1">Belongs to the bacterial ribosomal protein bL19 family.</text>
</comment>
<proteinExistence type="inferred from homology"/>
<feature type="chain" id="PRO_1000193920" description="Large ribosomal subunit protein bL19">
    <location>
        <begin position="1"/>
        <end position="125"/>
    </location>
</feature>